<sequence>MQIWVDADACPGVIKEIIYRAAERRQIQTTLVANQMLRTPPSKYIRAIQVAHGFDVADAHIVDQVVAGDLVVTADIPLASLVIERGAHALNPRGEMYTTANIRERLTMRNFMEDLRSAGVQTGGPNAFSQADRQAFANQLDRFLAKIPVA</sequence>
<organism>
    <name type="scientific">Dechloromonas aromatica (strain RCB)</name>
    <dbReference type="NCBI Taxonomy" id="159087"/>
    <lineage>
        <taxon>Bacteria</taxon>
        <taxon>Pseudomonadati</taxon>
        <taxon>Pseudomonadota</taxon>
        <taxon>Betaproteobacteria</taxon>
        <taxon>Rhodocyclales</taxon>
        <taxon>Azonexaceae</taxon>
        <taxon>Dechloromonas</taxon>
    </lineage>
</organism>
<reference key="1">
    <citation type="journal article" date="2009" name="BMC Genomics">
        <title>Metabolic analysis of the soil microbe Dechloromonas aromatica str. RCB: indications of a surprisingly complex life-style and cryptic anaerobic pathways for aromatic degradation.</title>
        <authorList>
            <person name="Salinero K.K."/>
            <person name="Keller K."/>
            <person name="Feil W.S."/>
            <person name="Feil H."/>
            <person name="Trong S."/>
            <person name="Di Bartolo G."/>
            <person name="Lapidus A."/>
        </authorList>
    </citation>
    <scope>NUCLEOTIDE SEQUENCE [LARGE SCALE GENOMIC DNA]</scope>
    <source>
        <strain>RCB</strain>
    </source>
</reference>
<evidence type="ECO:0000255" key="1">
    <source>
        <dbReference type="HAMAP-Rule" id="MF_00489"/>
    </source>
</evidence>
<feature type="chain" id="PRO_0000241812" description="UPF0178 protein Daro_2879">
    <location>
        <begin position="1"/>
        <end position="150"/>
    </location>
</feature>
<name>Y2879_DECAR</name>
<proteinExistence type="inferred from homology"/>
<comment type="similarity">
    <text evidence="1">Belongs to the UPF0178 family.</text>
</comment>
<accession>Q47C22</accession>
<gene>
    <name type="ordered locus">Daro_2879</name>
</gene>
<dbReference type="EMBL" id="CP000089">
    <property type="protein sequence ID" value="AAZ47609.1"/>
    <property type="molecule type" value="Genomic_DNA"/>
</dbReference>
<dbReference type="STRING" id="159087.Daro_2879"/>
<dbReference type="KEGG" id="dar:Daro_2879"/>
<dbReference type="eggNOG" id="COG1671">
    <property type="taxonomic scope" value="Bacteria"/>
</dbReference>
<dbReference type="HOGENOM" id="CLU_106619_2_1_4"/>
<dbReference type="OrthoDB" id="9798918at2"/>
<dbReference type="CDD" id="cd18720">
    <property type="entry name" value="PIN_YqxD-like"/>
    <property type="match status" value="1"/>
</dbReference>
<dbReference type="HAMAP" id="MF_00489">
    <property type="entry name" value="UPF0178"/>
    <property type="match status" value="1"/>
</dbReference>
<dbReference type="InterPro" id="IPR003791">
    <property type="entry name" value="UPF0178"/>
</dbReference>
<dbReference type="NCBIfam" id="NF001095">
    <property type="entry name" value="PRK00124.1"/>
    <property type="match status" value="1"/>
</dbReference>
<dbReference type="PANTHER" id="PTHR35146">
    <property type="entry name" value="UPF0178 PROTEIN YAII"/>
    <property type="match status" value="1"/>
</dbReference>
<dbReference type="PANTHER" id="PTHR35146:SF1">
    <property type="entry name" value="UPF0178 PROTEIN YAII"/>
    <property type="match status" value="1"/>
</dbReference>
<dbReference type="Pfam" id="PF02639">
    <property type="entry name" value="DUF188"/>
    <property type="match status" value="1"/>
</dbReference>
<protein>
    <recommendedName>
        <fullName evidence="1">UPF0178 protein Daro_2879</fullName>
    </recommendedName>
</protein>